<reference key="1">
    <citation type="journal article" date="2010" name="Genome Biol.">
        <title>Structure and dynamics of the pan-genome of Streptococcus pneumoniae and closely related species.</title>
        <authorList>
            <person name="Donati C."/>
            <person name="Hiller N.L."/>
            <person name="Tettelin H."/>
            <person name="Muzzi A."/>
            <person name="Croucher N.J."/>
            <person name="Angiuoli S.V."/>
            <person name="Oggioni M."/>
            <person name="Dunning Hotopp J.C."/>
            <person name="Hu F.Z."/>
            <person name="Riley D.R."/>
            <person name="Covacci A."/>
            <person name="Mitchell T.J."/>
            <person name="Bentley S.D."/>
            <person name="Kilian M."/>
            <person name="Ehrlich G.D."/>
            <person name="Rappuoli R."/>
            <person name="Moxon E.R."/>
            <person name="Masignani V."/>
        </authorList>
    </citation>
    <scope>NUCLEOTIDE SEQUENCE [LARGE SCALE GENOMIC DNA]</scope>
    <source>
        <strain>Hungary19A-6</strain>
    </source>
</reference>
<gene>
    <name evidence="1" type="primary">dapA</name>
    <name type="ordered locus">SPH_1118</name>
</gene>
<name>DAPA_STRPI</name>
<dbReference type="EC" id="4.3.3.7" evidence="1"/>
<dbReference type="EMBL" id="CP000936">
    <property type="protein sequence ID" value="ACA35687.1"/>
    <property type="molecule type" value="Genomic_DNA"/>
</dbReference>
<dbReference type="RefSeq" id="WP_000121646.1">
    <property type="nucleotide sequence ID" value="NC_010380.1"/>
</dbReference>
<dbReference type="SMR" id="B1IBH4"/>
<dbReference type="KEGG" id="spv:SPH_1118"/>
<dbReference type="HOGENOM" id="CLU_049343_7_1_9"/>
<dbReference type="UniPathway" id="UPA00034">
    <property type="reaction ID" value="UER00017"/>
</dbReference>
<dbReference type="Proteomes" id="UP000002163">
    <property type="component" value="Chromosome"/>
</dbReference>
<dbReference type="GO" id="GO:0005829">
    <property type="term" value="C:cytosol"/>
    <property type="evidence" value="ECO:0007669"/>
    <property type="project" value="TreeGrafter"/>
</dbReference>
<dbReference type="GO" id="GO:0008840">
    <property type="term" value="F:4-hydroxy-tetrahydrodipicolinate synthase activity"/>
    <property type="evidence" value="ECO:0007669"/>
    <property type="project" value="UniProtKB-UniRule"/>
</dbReference>
<dbReference type="GO" id="GO:0019877">
    <property type="term" value="P:diaminopimelate biosynthetic process"/>
    <property type="evidence" value="ECO:0007669"/>
    <property type="project" value="UniProtKB-UniRule"/>
</dbReference>
<dbReference type="GO" id="GO:0009089">
    <property type="term" value="P:lysine biosynthetic process via diaminopimelate"/>
    <property type="evidence" value="ECO:0007669"/>
    <property type="project" value="UniProtKB-UniRule"/>
</dbReference>
<dbReference type="CDD" id="cd00950">
    <property type="entry name" value="DHDPS"/>
    <property type="match status" value="1"/>
</dbReference>
<dbReference type="Gene3D" id="3.20.20.70">
    <property type="entry name" value="Aldolase class I"/>
    <property type="match status" value="1"/>
</dbReference>
<dbReference type="HAMAP" id="MF_00418">
    <property type="entry name" value="DapA"/>
    <property type="match status" value="1"/>
</dbReference>
<dbReference type="InterPro" id="IPR013785">
    <property type="entry name" value="Aldolase_TIM"/>
</dbReference>
<dbReference type="InterPro" id="IPR005263">
    <property type="entry name" value="DapA"/>
</dbReference>
<dbReference type="InterPro" id="IPR002220">
    <property type="entry name" value="DapA-like"/>
</dbReference>
<dbReference type="InterPro" id="IPR020625">
    <property type="entry name" value="Schiff_base-form_aldolases_AS"/>
</dbReference>
<dbReference type="NCBIfam" id="TIGR00674">
    <property type="entry name" value="dapA"/>
    <property type="match status" value="1"/>
</dbReference>
<dbReference type="PANTHER" id="PTHR12128:SF66">
    <property type="entry name" value="4-HYDROXY-2-OXOGLUTARATE ALDOLASE, MITOCHONDRIAL"/>
    <property type="match status" value="1"/>
</dbReference>
<dbReference type="PANTHER" id="PTHR12128">
    <property type="entry name" value="DIHYDRODIPICOLINATE SYNTHASE"/>
    <property type="match status" value="1"/>
</dbReference>
<dbReference type="Pfam" id="PF00701">
    <property type="entry name" value="DHDPS"/>
    <property type="match status" value="1"/>
</dbReference>
<dbReference type="PIRSF" id="PIRSF001365">
    <property type="entry name" value="DHDPS"/>
    <property type="match status" value="1"/>
</dbReference>
<dbReference type="PRINTS" id="PR00146">
    <property type="entry name" value="DHPICSNTHASE"/>
</dbReference>
<dbReference type="SMART" id="SM01130">
    <property type="entry name" value="DHDPS"/>
    <property type="match status" value="1"/>
</dbReference>
<dbReference type="SUPFAM" id="SSF51569">
    <property type="entry name" value="Aldolase"/>
    <property type="match status" value="1"/>
</dbReference>
<dbReference type="PROSITE" id="PS00666">
    <property type="entry name" value="DHDPS_2"/>
    <property type="match status" value="1"/>
</dbReference>
<evidence type="ECO:0000255" key="1">
    <source>
        <dbReference type="HAMAP-Rule" id="MF_00418"/>
    </source>
</evidence>
<evidence type="ECO:0000305" key="2"/>
<sequence>MSYQDLKKCKIITAFITPFHEDGSINFDAIPALIEHLLAHHTDGILLAGTTAESPTLTHDEELELFAAVQKVVNGRVPLIAGVGTNDTRDSIEFVKEVAEFGGFAAGLAIVPYYNKPSQEGMYQHFKTIADASDLPIIIYNIPGRVVVELTPETMLRLADHPNIIGVKECTSLANMAYLIEHKPEEFLIYTGEDGDAFHAMNLGADGVISVASHTNGDEMHEMFTAIAESDMKKAAAIQRKFIPKVNALFSYPSPAPVKAILNYMGFEAGPTRLPLVPAPEEDAKRIIKVVVDGDYEATKATVTGVLRPDY</sequence>
<keyword id="KW-0028">Amino-acid biosynthesis</keyword>
<keyword id="KW-0963">Cytoplasm</keyword>
<keyword id="KW-0220">Diaminopimelate biosynthesis</keyword>
<keyword id="KW-0456">Lyase</keyword>
<keyword id="KW-0457">Lysine biosynthesis</keyword>
<keyword id="KW-0704">Schiff base</keyword>
<accession>B1IBH4</accession>
<proteinExistence type="inferred from homology"/>
<organism>
    <name type="scientific">Streptococcus pneumoniae (strain Hungary19A-6)</name>
    <dbReference type="NCBI Taxonomy" id="487214"/>
    <lineage>
        <taxon>Bacteria</taxon>
        <taxon>Bacillati</taxon>
        <taxon>Bacillota</taxon>
        <taxon>Bacilli</taxon>
        <taxon>Lactobacillales</taxon>
        <taxon>Streptococcaceae</taxon>
        <taxon>Streptococcus</taxon>
    </lineage>
</organism>
<feature type="chain" id="PRO_1000124069" description="4-hydroxy-tetrahydrodipicolinate synthase">
    <location>
        <begin position="1"/>
        <end position="311"/>
    </location>
</feature>
<feature type="active site" description="Proton donor/acceptor" evidence="1">
    <location>
        <position position="140"/>
    </location>
</feature>
<feature type="active site" description="Schiff-base intermediate with substrate" evidence="1">
    <location>
        <position position="168"/>
    </location>
</feature>
<feature type="binding site" evidence="1">
    <location>
        <position position="51"/>
    </location>
    <ligand>
        <name>pyruvate</name>
        <dbReference type="ChEBI" id="CHEBI:15361"/>
    </ligand>
</feature>
<feature type="binding site" evidence="1">
    <location>
        <position position="209"/>
    </location>
    <ligand>
        <name>pyruvate</name>
        <dbReference type="ChEBI" id="CHEBI:15361"/>
    </ligand>
</feature>
<feature type="site" description="Part of a proton relay during catalysis" evidence="1">
    <location>
        <position position="50"/>
    </location>
</feature>
<feature type="site" description="Part of a proton relay during catalysis" evidence="1">
    <location>
        <position position="114"/>
    </location>
</feature>
<comment type="function">
    <text evidence="1">Catalyzes the condensation of (S)-aspartate-beta-semialdehyde [(S)-ASA] and pyruvate to 4-hydroxy-tetrahydrodipicolinate (HTPA).</text>
</comment>
<comment type="catalytic activity">
    <reaction evidence="1">
        <text>L-aspartate 4-semialdehyde + pyruvate = (2S,4S)-4-hydroxy-2,3,4,5-tetrahydrodipicolinate + H2O + H(+)</text>
        <dbReference type="Rhea" id="RHEA:34171"/>
        <dbReference type="ChEBI" id="CHEBI:15361"/>
        <dbReference type="ChEBI" id="CHEBI:15377"/>
        <dbReference type="ChEBI" id="CHEBI:15378"/>
        <dbReference type="ChEBI" id="CHEBI:67139"/>
        <dbReference type="ChEBI" id="CHEBI:537519"/>
        <dbReference type="EC" id="4.3.3.7"/>
    </reaction>
</comment>
<comment type="pathway">
    <text evidence="1">Amino-acid biosynthesis; L-lysine biosynthesis via DAP pathway; (S)-tetrahydrodipicolinate from L-aspartate: step 3/4.</text>
</comment>
<comment type="subunit">
    <text evidence="1">Homotetramer; dimer of dimers.</text>
</comment>
<comment type="subcellular location">
    <subcellularLocation>
        <location evidence="1">Cytoplasm</location>
    </subcellularLocation>
</comment>
<comment type="similarity">
    <text evidence="1">Belongs to the DapA family.</text>
</comment>
<comment type="caution">
    <text evidence="2">Was originally thought to be a dihydrodipicolinate synthase (DHDPS), catalyzing the condensation of (S)-aspartate-beta-semialdehyde [(S)-ASA] and pyruvate to dihydrodipicolinate (DHDP). However, it was shown in E.coli that the product of the enzymatic reaction is not dihydrodipicolinate but in fact (4S)-4-hydroxy-2,3,4,5-tetrahydro-(2S)-dipicolinic acid (HTPA), and that the consecutive dehydration reaction leading to DHDP is not spontaneous but catalyzed by DapB.</text>
</comment>
<protein>
    <recommendedName>
        <fullName evidence="1">4-hydroxy-tetrahydrodipicolinate synthase</fullName>
        <shortName evidence="1">HTPA synthase</shortName>
        <ecNumber evidence="1">4.3.3.7</ecNumber>
    </recommendedName>
</protein>